<sequence length="377" mass="41914">MTKKRVALIFGGNSSEHDVSKRSAQNFYNAIEATDKYEIIVFAIAQNGFFLDTESSKKILALEDEQPIVDAFMKTVDTSDPLARIHALKSAGDFDIFFPVVHGNLGEDGTLQGLFKLLDKPYVGAPLRGHAVSFDKALTKELLTVNGIRNTKYIVVDPESANNWSWDKIVAELGNIVFVKAANQGSSVGISRVTNAEEYTEALSDSFQYDYKVLIEEAVNGARELEVGVIGNDQPLVSEIGAHTVPNQGSGDGWYDYNNKFVDNSAVHFEIPAQLSPEVTKEVKQMALDAYKVLNLRGEARMDFLLDENNVPYLGEPNTLPGFTNMSLFKRLWDYSDINNAKLVDMLIDYGFEDFAQNKKLSYSFVSLGEEKIGKFN</sequence>
<protein>
    <recommendedName>
        <fullName evidence="2">D-alanine--D-alanine ligase</fullName>
        <ecNumber evidence="2">6.3.2.4</ecNumber>
    </recommendedName>
    <alternativeName>
        <fullName evidence="2">D-Ala-D-Ala ligase</fullName>
    </alternativeName>
    <alternativeName>
        <fullName evidence="2">D-alanylalanine synthetase</fullName>
    </alternativeName>
</protein>
<reference key="1">
    <citation type="journal article" date="1995" name="Gene">
        <title>Analysis of genes encoding D-alanine:D-alanine ligase-related enzymes in Leuconostoc mesenteroides and Lactobacillus spp.</title>
        <authorList>
            <person name="Elisha B.G."/>
            <person name="Courvalin P."/>
        </authorList>
    </citation>
    <scope>NUCLEOTIDE SEQUENCE [GENOMIC DNA]</scope>
    <source>
        <strain>BM4298</strain>
    </source>
</reference>
<comment type="function">
    <text evidence="2">Cell wall formation.</text>
</comment>
<comment type="catalytic activity">
    <reaction evidence="2">
        <text>2 D-alanine + ATP = D-alanyl-D-alanine + ADP + phosphate + H(+)</text>
        <dbReference type="Rhea" id="RHEA:11224"/>
        <dbReference type="ChEBI" id="CHEBI:15378"/>
        <dbReference type="ChEBI" id="CHEBI:30616"/>
        <dbReference type="ChEBI" id="CHEBI:43474"/>
        <dbReference type="ChEBI" id="CHEBI:57416"/>
        <dbReference type="ChEBI" id="CHEBI:57822"/>
        <dbReference type="ChEBI" id="CHEBI:456216"/>
        <dbReference type="EC" id="6.3.2.4"/>
    </reaction>
</comment>
<comment type="cofactor">
    <cofactor evidence="1">
        <name>Mg(2+)</name>
        <dbReference type="ChEBI" id="CHEBI:18420"/>
    </cofactor>
    <cofactor evidence="1">
        <name>Mn(2+)</name>
        <dbReference type="ChEBI" id="CHEBI:29035"/>
    </cofactor>
    <text evidence="1">Binds 2 magnesium or manganese ions per subunit.</text>
</comment>
<comment type="pathway">
    <text evidence="2">Cell wall biogenesis; peptidoglycan biosynthesis.</text>
</comment>
<comment type="subcellular location">
    <subcellularLocation>
        <location evidence="2">Cytoplasm</location>
    </subcellularLocation>
</comment>
<comment type="similarity">
    <text evidence="2">Belongs to the D-alanine--D-alanine ligase family.</text>
</comment>
<gene>
    <name evidence="2" type="primary">ddl</name>
</gene>
<evidence type="ECO:0000250" key="1"/>
<evidence type="ECO:0000255" key="2">
    <source>
        <dbReference type="HAMAP-Rule" id="MF_00047"/>
    </source>
</evidence>
<accession>Q48745</accession>
<feature type="chain" id="PRO_0000177836" description="D-alanine--D-alanine ligase">
    <location>
        <begin position="1"/>
        <end position="377"/>
    </location>
</feature>
<feature type="domain" description="ATP-grasp" evidence="2">
    <location>
        <begin position="140"/>
        <end position="349"/>
    </location>
</feature>
<feature type="binding site" evidence="2">
    <location>
        <begin position="170"/>
        <end position="225"/>
    </location>
    <ligand>
        <name>ATP</name>
        <dbReference type="ChEBI" id="CHEBI:30616"/>
    </ligand>
</feature>
<feature type="binding site" evidence="2">
    <location>
        <position position="303"/>
    </location>
    <ligand>
        <name>Mg(2+)</name>
        <dbReference type="ChEBI" id="CHEBI:18420"/>
        <label>1</label>
    </ligand>
</feature>
<feature type="binding site" evidence="2">
    <location>
        <position position="316"/>
    </location>
    <ligand>
        <name>Mg(2+)</name>
        <dbReference type="ChEBI" id="CHEBI:18420"/>
        <label>1</label>
    </ligand>
</feature>
<feature type="binding site" evidence="2">
    <location>
        <position position="316"/>
    </location>
    <ligand>
        <name>Mg(2+)</name>
        <dbReference type="ChEBI" id="CHEBI:18420"/>
        <label>2</label>
    </ligand>
</feature>
<feature type="binding site" evidence="2">
    <location>
        <position position="318"/>
    </location>
    <ligand>
        <name>Mg(2+)</name>
        <dbReference type="ChEBI" id="CHEBI:18420"/>
        <label>2</label>
    </ligand>
</feature>
<organism>
    <name type="scientific">Leuconostoc mesenteroides</name>
    <dbReference type="NCBI Taxonomy" id="1245"/>
    <lineage>
        <taxon>Bacteria</taxon>
        <taxon>Bacillati</taxon>
        <taxon>Bacillota</taxon>
        <taxon>Bacilli</taxon>
        <taxon>Lactobacillales</taxon>
        <taxon>Lactobacillaceae</taxon>
        <taxon>Leuconostoc</taxon>
    </lineage>
</organism>
<dbReference type="EC" id="6.3.2.4" evidence="2"/>
<dbReference type="EMBL" id="U08909">
    <property type="protein sequence ID" value="AAA87679.1"/>
    <property type="molecule type" value="Genomic_DNA"/>
</dbReference>
<dbReference type="RefSeq" id="WP_060461265.1">
    <property type="nucleotide sequence ID" value="NZ_JAQPVU010000003.1"/>
</dbReference>
<dbReference type="SMR" id="Q48745"/>
<dbReference type="STRING" id="1245.ARA02_01225"/>
<dbReference type="UniPathway" id="UPA00219"/>
<dbReference type="GO" id="GO:0005829">
    <property type="term" value="C:cytosol"/>
    <property type="evidence" value="ECO:0007669"/>
    <property type="project" value="TreeGrafter"/>
</dbReference>
<dbReference type="GO" id="GO:0005524">
    <property type="term" value="F:ATP binding"/>
    <property type="evidence" value="ECO:0007669"/>
    <property type="project" value="UniProtKB-KW"/>
</dbReference>
<dbReference type="GO" id="GO:0008716">
    <property type="term" value="F:D-alanine-D-alanine ligase activity"/>
    <property type="evidence" value="ECO:0007669"/>
    <property type="project" value="UniProtKB-UniRule"/>
</dbReference>
<dbReference type="GO" id="GO:0046872">
    <property type="term" value="F:metal ion binding"/>
    <property type="evidence" value="ECO:0007669"/>
    <property type="project" value="UniProtKB-KW"/>
</dbReference>
<dbReference type="GO" id="GO:0071555">
    <property type="term" value="P:cell wall organization"/>
    <property type="evidence" value="ECO:0007669"/>
    <property type="project" value="UniProtKB-KW"/>
</dbReference>
<dbReference type="GO" id="GO:0009252">
    <property type="term" value="P:peptidoglycan biosynthetic process"/>
    <property type="evidence" value="ECO:0007669"/>
    <property type="project" value="UniProtKB-UniRule"/>
</dbReference>
<dbReference type="GO" id="GO:0008360">
    <property type="term" value="P:regulation of cell shape"/>
    <property type="evidence" value="ECO:0007669"/>
    <property type="project" value="UniProtKB-KW"/>
</dbReference>
<dbReference type="Gene3D" id="3.40.50.20">
    <property type="match status" value="1"/>
</dbReference>
<dbReference type="Gene3D" id="3.30.1490.20">
    <property type="entry name" value="ATP-grasp fold, A domain"/>
    <property type="match status" value="1"/>
</dbReference>
<dbReference type="Gene3D" id="3.30.470.20">
    <property type="entry name" value="ATP-grasp fold, B domain"/>
    <property type="match status" value="1"/>
</dbReference>
<dbReference type="HAMAP" id="MF_00047">
    <property type="entry name" value="Dala_Dala_lig"/>
    <property type="match status" value="1"/>
</dbReference>
<dbReference type="InterPro" id="IPR011761">
    <property type="entry name" value="ATP-grasp"/>
</dbReference>
<dbReference type="InterPro" id="IPR013815">
    <property type="entry name" value="ATP_grasp_subdomain_1"/>
</dbReference>
<dbReference type="InterPro" id="IPR000291">
    <property type="entry name" value="D-Ala_lig_Van_CS"/>
</dbReference>
<dbReference type="InterPro" id="IPR005905">
    <property type="entry name" value="D_ala_D_ala"/>
</dbReference>
<dbReference type="InterPro" id="IPR011095">
    <property type="entry name" value="Dala_Dala_lig_C"/>
</dbReference>
<dbReference type="InterPro" id="IPR011127">
    <property type="entry name" value="Dala_Dala_lig_N"/>
</dbReference>
<dbReference type="InterPro" id="IPR016185">
    <property type="entry name" value="PreATP-grasp_dom_sf"/>
</dbReference>
<dbReference type="NCBIfam" id="TIGR01205">
    <property type="entry name" value="D_ala_D_alaTIGR"/>
    <property type="match status" value="1"/>
</dbReference>
<dbReference type="NCBIfam" id="NF002528">
    <property type="entry name" value="PRK01966.1-4"/>
    <property type="match status" value="1"/>
</dbReference>
<dbReference type="PANTHER" id="PTHR23132">
    <property type="entry name" value="D-ALANINE--D-ALANINE LIGASE"/>
    <property type="match status" value="1"/>
</dbReference>
<dbReference type="PANTHER" id="PTHR23132:SF25">
    <property type="entry name" value="D-ALANINE--D-ALANINE LIGASE A"/>
    <property type="match status" value="1"/>
</dbReference>
<dbReference type="Pfam" id="PF07478">
    <property type="entry name" value="Dala_Dala_lig_C"/>
    <property type="match status" value="1"/>
</dbReference>
<dbReference type="Pfam" id="PF01820">
    <property type="entry name" value="Dala_Dala_lig_N"/>
    <property type="match status" value="1"/>
</dbReference>
<dbReference type="PIRSF" id="PIRSF039102">
    <property type="entry name" value="Ddl/VanB"/>
    <property type="match status" value="1"/>
</dbReference>
<dbReference type="SUPFAM" id="SSF56059">
    <property type="entry name" value="Glutathione synthetase ATP-binding domain-like"/>
    <property type="match status" value="1"/>
</dbReference>
<dbReference type="SUPFAM" id="SSF52440">
    <property type="entry name" value="PreATP-grasp domain"/>
    <property type="match status" value="1"/>
</dbReference>
<dbReference type="PROSITE" id="PS50975">
    <property type="entry name" value="ATP_GRASP"/>
    <property type="match status" value="1"/>
</dbReference>
<dbReference type="PROSITE" id="PS00843">
    <property type="entry name" value="DALA_DALA_LIGASE_1"/>
    <property type="match status" value="1"/>
</dbReference>
<dbReference type="PROSITE" id="PS00844">
    <property type="entry name" value="DALA_DALA_LIGASE_2"/>
    <property type="match status" value="1"/>
</dbReference>
<keyword id="KW-0067">ATP-binding</keyword>
<keyword id="KW-0133">Cell shape</keyword>
<keyword id="KW-0961">Cell wall biogenesis/degradation</keyword>
<keyword id="KW-0963">Cytoplasm</keyword>
<keyword id="KW-0436">Ligase</keyword>
<keyword id="KW-0460">Magnesium</keyword>
<keyword id="KW-0464">Manganese</keyword>
<keyword id="KW-0479">Metal-binding</keyword>
<keyword id="KW-0547">Nucleotide-binding</keyword>
<keyword id="KW-0573">Peptidoglycan synthesis</keyword>
<proteinExistence type="inferred from homology"/>
<name>DDL_LEUME</name>